<gene>
    <name evidence="1" type="primary">erpA</name>
    <name type="ordered locus">ECSE_0157</name>
</gene>
<proteinExistence type="inferred from homology"/>
<accession>B6HZD2</accession>
<feature type="chain" id="PRO_1000144915" description="Iron-sulfur cluster insertion protein ErpA">
    <location>
        <begin position="1"/>
        <end position="114"/>
    </location>
</feature>
<feature type="binding site" evidence="1">
    <location>
        <position position="42"/>
    </location>
    <ligand>
        <name>iron-sulfur cluster</name>
        <dbReference type="ChEBI" id="CHEBI:30408"/>
    </ligand>
</feature>
<feature type="binding site" evidence="1">
    <location>
        <position position="106"/>
    </location>
    <ligand>
        <name>iron-sulfur cluster</name>
        <dbReference type="ChEBI" id="CHEBI:30408"/>
    </ligand>
</feature>
<feature type="binding site" evidence="1">
    <location>
        <position position="108"/>
    </location>
    <ligand>
        <name>iron-sulfur cluster</name>
        <dbReference type="ChEBI" id="CHEBI:30408"/>
    </ligand>
</feature>
<sequence length="114" mass="12100">MSDDVALPLEFTDAAANKVKSLIADEDNPNLKLRVYITGGGCSGFQYGFTFDDQVNEGDMTIEKQGVGLVVDPMSLQYLVGGSVDYTEGLEGSRFIVTNPNAKSTCGCGSSFSI</sequence>
<keyword id="KW-0408">Iron</keyword>
<keyword id="KW-0411">Iron-sulfur</keyword>
<keyword id="KW-0479">Metal-binding</keyword>
<evidence type="ECO:0000255" key="1">
    <source>
        <dbReference type="HAMAP-Rule" id="MF_01380"/>
    </source>
</evidence>
<comment type="function">
    <text evidence="1">Required for insertion of 4Fe-4S clusters for at least IspG.</text>
</comment>
<comment type="cofactor">
    <cofactor evidence="1">
        <name>iron-sulfur cluster</name>
        <dbReference type="ChEBI" id="CHEBI:30408"/>
    </cofactor>
    <text evidence="1">Binds 1 iron-sulfur cluster per subunit.</text>
</comment>
<comment type="subunit">
    <text evidence="1">Homodimer.</text>
</comment>
<comment type="similarity">
    <text evidence="1">Belongs to the HesB/IscA family.</text>
</comment>
<reference key="1">
    <citation type="journal article" date="2008" name="DNA Res.">
        <title>Complete genome sequence and comparative analysis of the wild-type commensal Escherichia coli strain SE11 isolated from a healthy adult.</title>
        <authorList>
            <person name="Oshima K."/>
            <person name="Toh H."/>
            <person name="Ogura Y."/>
            <person name="Sasamoto H."/>
            <person name="Morita H."/>
            <person name="Park S.-H."/>
            <person name="Ooka T."/>
            <person name="Iyoda S."/>
            <person name="Taylor T.D."/>
            <person name="Hayashi T."/>
            <person name="Itoh K."/>
            <person name="Hattori M."/>
        </authorList>
    </citation>
    <scope>NUCLEOTIDE SEQUENCE [LARGE SCALE GENOMIC DNA]</scope>
    <source>
        <strain>SE11</strain>
    </source>
</reference>
<protein>
    <recommendedName>
        <fullName evidence="1">Iron-sulfur cluster insertion protein ErpA</fullName>
    </recommendedName>
</protein>
<name>ERPA_ECOSE</name>
<dbReference type="EMBL" id="AP009240">
    <property type="protein sequence ID" value="BAG75681.1"/>
    <property type="molecule type" value="Genomic_DNA"/>
</dbReference>
<dbReference type="RefSeq" id="WP_001295564.1">
    <property type="nucleotide sequence ID" value="NC_011415.1"/>
</dbReference>
<dbReference type="SMR" id="B6HZD2"/>
<dbReference type="GeneID" id="93777270"/>
<dbReference type="KEGG" id="ecy:ECSE_0157"/>
<dbReference type="HOGENOM" id="CLU_069054_5_3_6"/>
<dbReference type="Proteomes" id="UP000008199">
    <property type="component" value="Chromosome"/>
</dbReference>
<dbReference type="GO" id="GO:0005829">
    <property type="term" value="C:cytosol"/>
    <property type="evidence" value="ECO:0007669"/>
    <property type="project" value="TreeGrafter"/>
</dbReference>
<dbReference type="GO" id="GO:0051537">
    <property type="term" value="F:2 iron, 2 sulfur cluster binding"/>
    <property type="evidence" value="ECO:0007669"/>
    <property type="project" value="TreeGrafter"/>
</dbReference>
<dbReference type="GO" id="GO:0051539">
    <property type="term" value="F:4 iron, 4 sulfur cluster binding"/>
    <property type="evidence" value="ECO:0007669"/>
    <property type="project" value="TreeGrafter"/>
</dbReference>
<dbReference type="GO" id="GO:0005506">
    <property type="term" value="F:iron ion binding"/>
    <property type="evidence" value="ECO:0007669"/>
    <property type="project" value="UniProtKB-UniRule"/>
</dbReference>
<dbReference type="GO" id="GO:0016226">
    <property type="term" value="P:iron-sulfur cluster assembly"/>
    <property type="evidence" value="ECO:0007669"/>
    <property type="project" value="UniProtKB-UniRule"/>
</dbReference>
<dbReference type="FunFam" id="2.60.300.12:FF:000002">
    <property type="entry name" value="Iron-sulfur cluster insertion protein ErpA"/>
    <property type="match status" value="1"/>
</dbReference>
<dbReference type="Gene3D" id="2.60.300.12">
    <property type="entry name" value="HesB-like domain"/>
    <property type="match status" value="1"/>
</dbReference>
<dbReference type="HAMAP" id="MF_01380">
    <property type="entry name" value="Fe_S_insert_ErpA"/>
    <property type="match status" value="1"/>
</dbReference>
<dbReference type="InterPro" id="IPR000361">
    <property type="entry name" value="FeS_biogenesis"/>
</dbReference>
<dbReference type="InterPro" id="IPR016092">
    <property type="entry name" value="FeS_cluster_insertion"/>
</dbReference>
<dbReference type="InterPro" id="IPR017870">
    <property type="entry name" value="FeS_cluster_insertion_CS"/>
</dbReference>
<dbReference type="InterPro" id="IPR023063">
    <property type="entry name" value="FeS_cluster_insertion_RrpA"/>
</dbReference>
<dbReference type="InterPro" id="IPR035903">
    <property type="entry name" value="HesB-like_dom_sf"/>
</dbReference>
<dbReference type="NCBIfam" id="TIGR00049">
    <property type="entry name" value="iron-sulfur cluster assembly accessory protein"/>
    <property type="match status" value="1"/>
</dbReference>
<dbReference type="NCBIfam" id="NF010147">
    <property type="entry name" value="PRK13623.1"/>
    <property type="match status" value="1"/>
</dbReference>
<dbReference type="PANTHER" id="PTHR43011">
    <property type="entry name" value="IRON-SULFUR CLUSTER ASSEMBLY 2 HOMOLOG, MITOCHONDRIAL"/>
    <property type="match status" value="1"/>
</dbReference>
<dbReference type="PANTHER" id="PTHR43011:SF1">
    <property type="entry name" value="IRON-SULFUR CLUSTER ASSEMBLY 2 HOMOLOG, MITOCHONDRIAL"/>
    <property type="match status" value="1"/>
</dbReference>
<dbReference type="Pfam" id="PF01521">
    <property type="entry name" value="Fe-S_biosyn"/>
    <property type="match status" value="1"/>
</dbReference>
<dbReference type="SUPFAM" id="SSF89360">
    <property type="entry name" value="HesB-like domain"/>
    <property type="match status" value="1"/>
</dbReference>
<dbReference type="PROSITE" id="PS01152">
    <property type="entry name" value="HESB"/>
    <property type="match status" value="1"/>
</dbReference>
<organism>
    <name type="scientific">Escherichia coli (strain SE11)</name>
    <dbReference type="NCBI Taxonomy" id="409438"/>
    <lineage>
        <taxon>Bacteria</taxon>
        <taxon>Pseudomonadati</taxon>
        <taxon>Pseudomonadota</taxon>
        <taxon>Gammaproteobacteria</taxon>
        <taxon>Enterobacterales</taxon>
        <taxon>Enterobacteriaceae</taxon>
        <taxon>Escherichia</taxon>
    </lineage>
</organism>